<proteinExistence type="inferred from homology"/>
<reference key="1">
    <citation type="journal article" date="2002" name="Nature">
        <title>Sequence and analysis of rice chromosome 4.</title>
        <authorList>
            <person name="Feng Q."/>
            <person name="Zhang Y."/>
            <person name="Hao P."/>
            <person name="Wang S."/>
            <person name="Fu G."/>
            <person name="Huang Y."/>
            <person name="Li Y."/>
            <person name="Zhu J."/>
            <person name="Liu Y."/>
            <person name="Hu X."/>
            <person name="Jia P."/>
            <person name="Zhang Y."/>
            <person name="Zhao Q."/>
            <person name="Ying K."/>
            <person name="Yu S."/>
            <person name="Tang Y."/>
            <person name="Weng Q."/>
            <person name="Zhang L."/>
            <person name="Lu Y."/>
            <person name="Mu J."/>
            <person name="Lu Y."/>
            <person name="Zhang L.S."/>
            <person name="Yu Z."/>
            <person name="Fan D."/>
            <person name="Liu X."/>
            <person name="Lu T."/>
            <person name="Li C."/>
            <person name="Wu Y."/>
            <person name="Sun T."/>
            <person name="Lei H."/>
            <person name="Li T."/>
            <person name="Hu H."/>
            <person name="Guan J."/>
            <person name="Wu M."/>
            <person name="Zhang R."/>
            <person name="Zhou B."/>
            <person name="Chen Z."/>
            <person name="Chen L."/>
            <person name="Jin Z."/>
            <person name="Wang R."/>
            <person name="Yin H."/>
            <person name="Cai Z."/>
            <person name="Ren S."/>
            <person name="Lv G."/>
            <person name="Gu W."/>
            <person name="Zhu G."/>
            <person name="Tu Y."/>
            <person name="Jia J."/>
            <person name="Zhang Y."/>
            <person name="Chen J."/>
            <person name="Kang H."/>
            <person name="Chen X."/>
            <person name="Shao C."/>
            <person name="Sun Y."/>
            <person name="Hu Q."/>
            <person name="Zhang X."/>
            <person name="Zhang W."/>
            <person name="Wang L."/>
            <person name="Ding C."/>
            <person name="Sheng H."/>
            <person name="Gu J."/>
            <person name="Chen S."/>
            <person name="Ni L."/>
            <person name="Zhu F."/>
            <person name="Chen W."/>
            <person name="Lan L."/>
            <person name="Lai Y."/>
            <person name="Cheng Z."/>
            <person name="Gu M."/>
            <person name="Jiang J."/>
            <person name="Li J."/>
            <person name="Hong G."/>
            <person name="Xue Y."/>
            <person name="Han B."/>
        </authorList>
    </citation>
    <scope>NUCLEOTIDE SEQUENCE [LARGE SCALE GENOMIC DNA]</scope>
    <source>
        <strain>cv. Guang-Lu-Ai No.4</strain>
    </source>
</reference>
<reference key="2">
    <citation type="journal article" date="2005" name="PLoS Biol.">
        <title>The genomes of Oryza sativa: a history of duplications.</title>
        <authorList>
            <person name="Yu J."/>
            <person name="Wang J."/>
            <person name="Lin W."/>
            <person name="Li S."/>
            <person name="Li H."/>
            <person name="Zhou J."/>
            <person name="Ni P."/>
            <person name="Dong W."/>
            <person name="Hu S."/>
            <person name="Zeng C."/>
            <person name="Zhang J."/>
            <person name="Zhang Y."/>
            <person name="Li R."/>
            <person name="Xu Z."/>
            <person name="Li S."/>
            <person name="Li X."/>
            <person name="Zheng H."/>
            <person name="Cong L."/>
            <person name="Lin L."/>
            <person name="Yin J."/>
            <person name="Geng J."/>
            <person name="Li G."/>
            <person name="Shi J."/>
            <person name="Liu J."/>
            <person name="Lv H."/>
            <person name="Li J."/>
            <person name="Wang J."/>
            <person name="Deng Y."/>
            <person name="Ran L."/>
            <person name="Shi X."/>
            <person name="Wang X."/>
            <person name="Wu Q."/>
            <person name="Li C."/>
            <person name="Ren X."/>
            <person name="Wang J."/>
            <person name="Wang X."/>
            <person name="Li D."/>
            <person name="Liu D."/>
            <person name="Zhang X."/>
            <person name="Ji Z."/>
            <person name="Zhao W."/>
            <person name="Sun Y."/>
            <person name="Zhang Z."/>
            <person name="Bao J."/>
            <person name="Han Y."/>
            <person name="Dong L."/>
            <person name="Ji J."/>
            <person name="Chen P."/>
            <person name="Wu S."/>
            <person name="Liu J."/>
            <person name="Xiao Y."/>
            <person name="Bu D."/>
            <person name="Tan J."/>
            <person name="Yang L."/>
            <person name="Ye C."/>
            <person name="Zhang J."/>
            <person name="Xu J."/>
            <person name="Zhou Y."/>
            <person name="Yu Y."/>
            <person name="Zhang B."/>
            <person name="Zhuang S."/>
            <person name="Wei H."/>
            <person name="Liu B."/>
            <person name="Lei M."/>
            <person name="Yu H."/>
            <person name="Li Y."/>
            <person name="Xu H."/>
            <person name="Wei S."/>
            <person name="He X."/>
            <person name="Fang L."/>
            <person name="Zhang Z."/>
            <person name="Zhang Y."/>
            <person name="Huang X."/>
            <person name="Su Z."/>
            <person name="Tong W."/>
            <person name="Li J."/>
            <person name="Tong Z."/>
            <person name="Li S."/>
            <person name="Ye J."/>
            <person name="Wang L."/>
            <person name="Fang L."/>
            <person name="Lei T."/>
            <person name="Chen C.-S."/>
            <person name="Chen H.-C."/>
            <person name="Xu Z."/>
            <person name="Li H."/>
            <person name="Huang H."/>
            <person name="Zhang F."/>
            <person name="Xu H."/>
            <person name="Li N."/>
            <person name="Zhao C."/>
            <person name="Li S."/>
            <person name="Dong L."/>
            <person name="Huang Y."/>
            <person name="Li L."/>
            <person name="Xi Y."/>
            <person name="Qi Q."/>
            <person name="Li W."/>
            <person name="Zhang B."/>
            <person name="Hu W."/>
            <person name="Zhang Y."/>
            <person name="Tian X."/>
            <person name="Jiao Y."/>
            <person name="Liang X."/>
            <person name="Jin J."/>
            <person name="Gao L."/>
            <person name="Zheng W."/>
            <person name="Hao B."/>
            <person name="Liu S.-M."/>
            <person name="Wang W."/>
            <person name="Yuan L."/>
            <person name="Cao M."/>
            <person name="McDermott J."/>
            <person name="Samudrala R."/>
            <person name="Wang J."/>
            <person name="Wong G.K.-S."/>
            <person name="Yang H."/>
        </authorList>
    </citation>
    <scope>NUCLEOTIDE SEQUENCE [LARGE SCALE GENOMIC DNA]</scope>
    <source>
        <strain>cv. 93-11</strain>
    </source>
</reference>
<feature type="chain" id="PRO_0000438166" description="Villin-4">
    <location>
        <begin position="1"/>
        <end position="946"/>
    </location>
</feature>
<feature type="repeat" description="Gelsolin-like 1" evidence="4">
    <location>
        <begin position="28"/>
        <end position="109"/>
    </location>
</feature>
<feature type="repeat" description="Gelsolin-like 2" evidence="4">
    <location>
        <begin position="152"/>
        <end position="219"/>
    </location>
</feature>
<feature type="repeat" description="Gelsolin-like 3" evidence="4">
    <location>
        <begin position="274"/>
        <end position="339"/>
    </location>
</feature>
<feature type="repeat" description="Gelsolin-like 4" evidence="4">
    <location>
        <begin position="641"/>
        <end position="715"/>
    </location>
</feature>
<feature type="domain" description="HP" evidence="5">
    <location>
        <begin position="881"/>
        <end position="946"/>
    </location>
</feature>
<feature type="region of interest" description="Disordered" evidence="6">
    <location>
        <begin position="744"/>
        <end position="783"/>
    </location>
</feature>
<feature type="region of interest" description="Disordered" evidence="6">
    <location>
        <begin position="846"/>
        <end position="902"/>
    </location>
</feature>
<feature type="compositionally biased region" description="Polar residues" evidence="6">
    <location>
        <begin position="765"/>
        <end position="777"/>
    </location>
</feature>
<feature type="compositionally biased region" description="Acidic residues" evidence="6">
    <location>
        <begin position="874"/>
        <end position="883"/>
    </location>
</feature>
<feature type="sequence conflict" description="In Ref. 1; CAH66716." evidence="7" ref="1">
    <original>ENL</original>
    <variation>GNQ</variation>
    <location>
        <begin position="635"/>
        <end position="637"/>
    </location>
</feature>
<name>VLN4_ORYSI</name>
<dbReference type="EMBL" id="CR855138">
    <property type="protein sequence ID" value="CAH66716.1"/>
    <property type="molecule type" value="Genomic_DNA"/>
</dbReference>
<dbReference type="EMBL" id="CM000129">
    <property type="protein sequence ID" value="EEC77939.1"/>
    <property type="molecule type" value="Genomic_DNA"/>
</dbReference>
<dbReference type="SMR" id="B8ATT7"/>
<dbReference type="STRING" id="39946.B8ATT7"/>
<dbReference type="EnsemblPlants" id="BGIOSGA014405-TA">
    <property type="protein sequence ID" value="BGIOSGA014405-PA"/>
    <property type="gene ID" value="BGIOSGA014405"/>
</dbReference>
<dbReference type="Gramene" id="BGIOSGA014405-TA">
    <property type="protein sequence ID" value="BGIOSGA014405-PA"/>
    <property type="gene ID" value="BGIOSGA014405"/>
</dbReference>
<dbReference type="HOGENOM" id="CLU_002568_2_1_1"/>
<dbReference type="OMA" id="LIFVWIG"/>
<dbReference type="Proteomes" id="UP000007015">
    <property type="component" value="Chromosome 4"/>
</dbReference>
<dbReference type="GO" id="GO:0032432">
    <property type="term" value="C:actin filament bundle"/>
    <property type="evidence" value="ECO:0000250"/>
    <property type="project" value="UniProtKB"/>
</dbReference>
<dbReference type="GO" id="GO:0005737">
    <property type="term" value="C:cytoplasm"/>
    <property type="evidence" value="ECO:0007669"/>
    <property type="project" value="UniProtKB-KW"/>
</dbReference>
<dbReference type="GO" id="GO:0051015">
    <property type="term" value="F:actin filament binding"/>
    <property type="evidence" value="ECO:0000250"/>
    <property type="project" value="UniProtKB"/>
</dbReference>
<dbReference type="GO" id="GO:0051693">
    <property type="term" value="P:actin filament capping"/>
    <property type="evidence" value="ECO:0000250"/>
    <property type="project" value="UniProtKB"/>
</dbReference>
<dbReference type="GO" id="GO:0007015">
    <property type="term" value="P:actin filament organization"/>
    <property type="evidence" value="ECO:0000250"/>
    <property type="project" value="UniProtKB"/>
</dbReference>
<dbReference type="GO" id="GO:0051014">
    <property type="term" value="P:actin filament severing"/>
    <property type="evidence" value="ECO:0000250"/>
    <property type="project" value="UniProtKB"/>
</dbReference>
<dbReference type="CDD" id="cd11290">
    <property type="entry name" value="gelsolin_S1_like"/>
    <property type="match status" value="1"/>
</dbReference>
<dbReference type="CDD" id="cd11289">
    <property type="entry name" value="gelsolin_S2_like"/>
    <property type="match status" value="1"/>
</dbReference>
<dbReference type="CDD" id="cd11293">
    <property type="entry name" value="gelsolin_S4_like"/>
    <property type="match status" value="1"/>
</dbReference>
<dbReference type="CDD" id="cd11288">
    <property type="entry name" value="gelsolin_S5_like"/>
    <property type="match status" value="1"/>
</dbReference>
<dbReference type="FunFam" id="3.40.20.10:FF:000001">
    <property type="entry name" value="Gelsolin"/>
    <property type="match status" value="1"/>
</dbReference>
<dbReference type="FunFam" id="3.40.20.10:FF:000002">
    <property type="entry name" value="Gelsolin"/>
    <property type="match status" value="1"/>
</dbReference>
<dbReference type="FunFam" id="3.40.20.10:FF:000033">
    <property type="entry name" value="Villin-4"/>
    <property type="match status" value="1"/>
</dbReference>
<dbReference type="FunFam" id="3.40.20.10:FF:000039">
    <property type="entry name" value="Villin-4"/>
    <property type="match status" value="1"/>
</dbReference>
<dbReference type="FunFam" id="1.10.950.10:FF:000004">
    <property type="entry name" value="Villin-like 1"/>
    <property type="match status" value="1"/>
</dbReference>
<dbReference type="FunFam" id="3.40.20.10:FF:000028">
    <property type="entry name" value="Villin-like 1"/>
    <property type="match status" value="1"/>
</dbReference>
<dbReference type="FunFam" id="3.40.20.10:FF:000038">
    <property type="entry name" value="Villin-like 1"/>
    <property type="match status" value="1"/>
</dbReference>
<dbReference type="Gene3D" id="3.40.20.10">
    <property type="entry name" value="Severin"/>
    <property type="match status" value="6"/>
</dbReference>
<dbReference type="Gene3D" id="1.10.950.10">
    <property type="entry name" value="Villin headpiece domain"/>
    <property type="match status" value="1"/>
</dbReference>
<dbReference type="InterPro" id="IPR029006">
    <property type="entry name" value="ADF-H/Gelsolin-like_dom_sf"/>
</dbReference>
<dbReference type="InterPro" id="IPR007123">
    <property type="entry name" value="Gelsolin-like_dom"/>
</dbReference>
<dbReference type="InterPro" id="IPR036180">
    <property type="entry name" value="Gelsolin-like_dom_sf"/>
</dbReference>
<dbReference type="InterPro" id="IPR007122">
    <property type="entry name" value="Villin/Gelsolin"/>
</dbReference>
<dbReference type="InterPro" id="IPR003128">
    <property type="entry name" value="Villin_headpiece"/>
</dbReference>
<dbReference type="InterPro" id="IPR036886">
    <property type="entry name" value="Villin_headpiece_dom_sf"/>
</dbReference>
<dbReference type="PANTHER" id="PTHR11977">
    <property type="entry name" value="VILLIN"/>
    <property type="match status" value="1"/>
</dbReference>
<dbReference type="PANTHER" id="PTHR11977:SF49">
    <property type="entry name" value="VILLIN-4"/>
    <property type="match status" value="1"/>
</dbReference>
<dbReference type="Pfam" id="PF00626">
    <property type="entry name" value="Gelsolin"/>
    <property type="match status" value="4"/>
</dbReference>
<dbReference type="Pfam" id="PF02209">
    <property type="entry name" value="VHP"/>
    <property type="match status" value="1"/>
</dbReference>
<dbReference type="PRINTS" id="PR00597">
    <property type="entry name" value="GELSOLIN"/>
</dbReference>
<dbReference type="SMART" id="SM00262">
    <property type="entry name" value="GEL"/>
    <property type="match status" value="6"/>
</dbReference>
<dbReference type="SMART" id="SM00153">
    <property type="entry name" value="VHP"/>
    <property type="match status" value="1"/>
</dbReference>
<dbReference type="SUPFAM" id="SSF55753">
    <property type="entry name" value="Actin depolymerizing proteins"/>
    <property type="match status" value="4"/>
</dbReference>
<dbReference type="SUPFAM" id="SSF82754">
    <property type="entry name" value="C-terminal, gelsolin-like domain of Sec23/24"/>
    <property type="match status" value="2"/>
</dbReference>
<dbReference type="SUPFAM" id="SSF47050">
    <property type="entry name" value="VHP, Villin headpiece domain"/>
    <property type="match status" value="1"/>
</dbReference>
<dbReference type="PROSITE" id="PS51089">
    <property type="entry name" value="HP"/>
    <property type="match status" value="1"/>
</dbReference>
<gene>
    <name evidence="2" type="primary">VLN4</name>
    <name evidence="9" type="ORF">OsI_17280</name>
    <name evidence="8" type="ORF">OSIGBa0118P15.6</name>
</gene>
<organism>
    <name type="scientific">Oryza sativa subsp. indica</name>
    <name type="common">Rice</name>
    <dbReference type="NCBI Taxonomy" id="39946"/>
    <lineage>
        <taxon>Eukaryota</taxon>
        <taxon>Viridiplantae</taxon>
        <taxon>Streptophyta</taxon>
        <taxon>Embryophyta</taxon>
        <taxon>Tracheophyta</taxon>
        <taxon>Spermatophyta</taxon>
        <taxon>Magnoliopsida</taxon>
        <taxon>Liliopsida</taxon>
        <taxon>Poales</taxon>
        <taxon>Poaceae</taxon>
        <taxon>BOP clade</taxon>
        <taxon>Oryzoideae</taxon>
        <taxon>Oryzeae</taxon>
        <taxon>Oryzinae</taxon>
        <taxon>Oryza</taxon>
        <taxon>Oryza sativa</taxon>
    </lineage>
</organism>
<sequence>MSISMKDVDPAFRGVGQKDGLEVWRIENFKPVPVPTSSHGKFYMGDSYIILKTTALKNGSFRHDLHYWLGKDTSQDEAGTAAILTVELDAALGGRAVQYREVQGGETEKLLSYFRPCIMPQPGGVASGFNHVEVNQQDHVTRLYVCQGKHVVHVKEVPFVRSSLNHEDIFILDTANKIFQFNGSNSCIQERAKALEVVQYIKDTFHEGKCEVAAVEDGKLMADTEAGEFWGLFGGFAPLPKKTSSEDNGDDKETVTKLLCFNQGTLEHISFESLEHELLETNKCYLLDCGAEMYVWMGRGTSLQVRKGASEAAEKLLIDENRKGSNVIKVIEGFETIMFKSKFNKWPPTPDLKLSSEDGRGKVAALLRSQGLDVKGLMKAAPEEEEPQPYIDCTGHLQVWRVNGDGKTLLSSSDQSKLYTGDCYIFQYTYTGDDKEECLIGTWFGKKSVEEDRTSAISLASKMFQAAKFQAAQARLYEGKEPIQFFVIFQSLQVFKGGLSSGYKNFIAVNGTDDDTYVEGGLALFRIQGSGSENMQAIQVDAVSSSLNSSYCYILHNGNTVFTWTGNLTTSLDNDLVERQLDVIKPDLPSRSQKEGRETDQFWELLGGKCKYSNKKIGKENESDPHLFSCILSKENLKVKEIHHFTQDDLMAEDIFVLDCRTDLFVWVGQEVDAKLRSQAMDIGEKFLLHDFLMENLSQDTPIFIVTEGSEPQFFTRFFTWDSAKSLMHGSSYQRKLAIVKGGATPSLDKPKRRTPAFSGRNAGQDKSQQRTRSMSHSPERHRIRGRSPAFTAIASAFENPSTRYLSTPPPAVKKLFPRSGGSELPKTSSKQSAINALTSAFEGPTKSTIPKSVKVSPEAEKAIQEEGSTIGESENEPEDDENSTIYPYERLTTTSDDPAPDIDVTKREVYLSSVEFAEKFGMTRASFKNLPKWKQNRLKSDLQLF</sequence>
<keyword id="KW-0117">Actin capping</keyword>
<keyword id="KW-0009">Actin-binding</keyword>
<keyword id="KW-0106">Calcium</keyword>
<keyword id="KW-0963">Cytoplasm</keyword>
<keyword id="KW-0206">Cytoskeleton</keyword>
<keyword id="KW-1185">Reference proteome</keyword>
<keyword id="KW-0677">Repeat</keyword>
<protein>
    <recommendedName>
        <fullName evidence="2">Villin-4</fullName>
    </recommendedName>
</protein>
<comment type="function">
    <text evidence="1 3">Ca(2+)-regulated actin-binding protein (By similarity). Binds actin microfilaments (MFs). Involved in actin filament bundling, severing and capping. Caps the barbed end of actin filaments and is able to sever them in a calcium-dependent manner (By similarity).</text>
</comment>
<comment type="subcellular location">
    <subcellularLocation>
        <location evidence="1">Cytoplasm</location>
        <location evidence="1">Cytoskeleton</location>
    </subcellularLocation>
</comment>
<comment type="similarity">
    <text evidence="7">Belongs to the villin/gelsolin family.</text>
</comment>
<accession>B8ATT7</accession>
<accession>Q01KK5</accession>
<evidence type="ECO:0000250" key="1">
    <source>
        <dbReference type="UniProtKB" id="O81644"/>
    </source>
</evidence>
<evidence type="ECO:0000250" key="2">
    <source>
        <dbReference type="UniProtKB" id="Q0JAD9"/>
    </source>
</evidence>
<evidence type="ECO:0000250" key="3">
    <source>
        <dbReference type="UniProtKB" id="Q10L71"/>
    </source>
</evidence>
<evidence type="ECO:0000255" key="4"/>
<evidence type="ECO:0000255" key="5">
    <source>
        <dbReference type="PROSITE-ProRule" id="PRU00595"/>
    </source>
</evidence>
<evidence type="ECO:0000256" key="6">
    <source>
        <dbReference type="SAM" id="MobiDB-lite"/>
    </source>
</evidence>
<evidence type="ECO:0000305" key="7"/>
<evidence type="ECO:0000312" key="8">
    <source>
        <dbReference type="EMBL" id="CAH66716.1"/>
    </source>
</evidence>
<evidence type="ECO:0000312" key="9">
    <source>
        <dbReference type="EMBL" id="EEC77939.1"/>
    </source>
</evidence>